<dbReference type="EMBL" id="CP000668">
    <property type="protein sequence ID" value="ABP39202.1"/>
    <property type="molecule type" value="Genomic_DNA"/>
</dbReference>
<dbReference type="RefSeq" id="WP_002210980.1">
    <property type="nucleotide sequence ID" value="NZ_CP009715.1"/>
</dbReference>
<dbReference type="KEGG" id="ypp:YPDSF_0796"/>
<dbReference type="PATRIC" id="fig|386656.14.peg.3065"/>
<dbReference type="GO" id="GO:0005886">
    <property type="term" value="C:plasma membrane"/>
    <property type="evidence" value="ECO:0007669"/>
    <property type="project" value="UniProtKB-SubCell"/>
</dbReference>
<dbReference type="HAMAP" id="MF_01085">
    <property type="entry name" value="UPF0283"/>
    <property type="match status" value="1"/>
</dbReference>
<dbReference type="InterPro" id="IPR021147">
    <property type="entry name" value="DUF697"/>
</dbReference>
<dbReference type="InterPro" id="IPR006507">
    <property type="entry name" value="UPF0283"/>
</dbReference>
<dbReference type="NCBIfam" id="TIGR01620">
    <property type="entry name" value="hyp_HI0043"/>
    <property type="match status" value="1"/>
</dbReference>
<dbReference type="PANTHER" id="PTHR39342">
    <property type="entry name" value="UPF0283 MEMBRANE PROTEIN YCJF"/>
    <property type="match status" value="1"/>
</dbReference>
<dbReference type="PANTHER" id="PTHR39342:SF1">
    <property type="entry name" value="UPF0283 MEMBRANE PROTEIN YCJF"/>
    <property type="match status" value="1"/>
</dbReference>
<dbReference type="Pfam" id="PF05128">
    <property type="entry name" value="DUF697"/>
    <property type="match status" value="1"/>
</dbReference>
<reference key="1">
    <citation type="submission" date="2007-02" db="EMBL/GenBank/DDBJ databases">
        <title>Complete sequence of chromosome of Yersinia pestis Pestoides F.</title>
        <authorList>
            <consortium name="US DOE Joint Genome Institute"/>
            <person name="Copeland A."/>
            <person name="Lucas S."/>
            <person name="Lapidus A."/>
            <person name="Barry K."/>
            <person name="Detter J.C."/>
            <person name="Glavina del Rio T."/>
            <person name="Hammon N."/>
            <person name="Israni S."/>
            <person name="Dalin E."/>
            <person name="Tice H."/>
            <person name="Pitluck S."/>
            <person name="Di Bartolo G."/>
            <person name="Chain P."/>
            <person name="Malfatti S."/>
            <person name="Shin M."/>
            <person name="Vergez L."/>
            <person name="Schmutz J."/>
            <person name="Larimer F."/>
            <person name="Land M."/>
            <person name="Hauser L."/>
            <person name="Worsham P."/>
            <person name="Chu M."/>
            <person name="Bearden S."/>
            <person name="Garcia E."/>
            <person name="Richardson P."/>
        </authorList>
    </citation>
    <scope>NUCLEOTIDE SEQUENCE [LARGE SCALE GENOMIC DNA]</scope>
    <source>
        <strain>Pestoides F</strain>
    </source>
</reference>
<protein>
    <recommendedName>
        <fullName evidence="1">UPF0283 membrane protein YPDSF_0796</fullName>
    </recommendedName>
</protein>
<feature type="chain" id="PRO_1000064860" description="UPF0283 membrane protein YPDSF_0796">
    <location>
        <begin position="1"/>
        <end position="353"/>
    </location>
</feature>
<feature type="transmembrane region" description="Helical" evidence="1">
    <location>
        <begin position="71"/>
        <end position="91"/>
    </location>
</feature>
<feature type="transmembrane region" description="Helical" evidence="1">
    <location>
        <begin position="101"/>
        <end position="121"/>
    </location>
</feature>
<feature type="transmembrane region" description="Helical" evidence="1">
    <location>
        <begin position="214"/>
        <end position="234"/>
    </location>
</feature>
<organism>
    <name type="scientific">Yersinia pestis (strain Pestoides F)</name>
    <dbReference type="NCBI Taxonomy" id="386656"/>
    <lineage>
        <taxon>Bacteria</taxon>
        <taxon>Pseudomonadati</taxon>
        <taxon>Pseudomonadota</taxon>
        <taxon>Gammaproteobacteria</taxon>
        <taxon>Enterobacterales</taxon>
        <taxon>Yersiniaceae</taxon>
        <taxon>Yersinia</taxon>
    </lineage>
</organism>
<comment type="subcellular location">
    <subcellularLocation>
        <location evidence="1">Cell inner membrane</location>
        <topology evidence="1">Multi-pass membrane protein</topology>
    </subcellularLocation>
</comment>
<comment type="similarity">
    <text evidence="1">Belongs to the UPF0283 family.</text>
</comment>
<gene>
    <name type="ordered locus">YPDSF_0796</name>
</gene>
<keyword id="KW-0997">Cell inner membrane</keyword>
<keyword id="KW-1003">Cell membrane</keyword>
<keyword id="KW-0472">Membrane</keyword>
<keyword id="KW-0812">Transmembrane</keyword>
<keyword id="KW-1133">Transmembrane helix</keyword>
<proteinExistence type="inferred from homology"/>
<evidence type="ECO:0000255" key="1">
    <source>
        <dbReference type="HAMAP-Rule" id="MF_01085"/>
    </source>
</evidence>
<accession>A4TIU0</accession>
<sequence length="353" mass="39264">MSEPLKPRIDFEQPLQSLDEPVLKSAQAFDEQAAEKFYPAAPELDAEDEEGRVEGLVNAALKPKRSLWRKMVTAGMVILGASVIAQSVQWVNQAWQQQDWIALGATTAGGLIILAGVGSVVTEWRRLYHLRQRAEERDIARALLVSHGVGQGRVFCEKLARQAGLDQGHPALQRWQASLHETHNDREVVELYAKLVQPALDNQARAEISRYAAESALMIAVSPLALVDMAFIAWRNIRLINRIAALYGIELGYFSRIRLFRLVLLNIAFAGASELVREVGMDWLSQDLAARLSARAAQGIGAGLLTARLGIKAMELCRPLPWLEGDKPKLGDFRRQLMNQLKNTLPKKDKTAH</sequence>
<name>Y796_YERPP</name>